<protein>
    <recommendedName>
        <fullName>Transcriptional coactivator YAP1</fullName>
        <shortName>Yes-associated protein 1</shortName>
        <shortName evidence="8">zYAP</shortName>
    </recommendedName>
    <alternativeName>
        <fullName>Protein yorkie homolog</fullName>
    </alternativeName>
    <alternativeName>
        <fullName>Yes-associated protein YAP65 homolog</fullName>
    </alternativeName>
</protein>
<proteinExistence type="evidence at transcript level"/>
<comment type="function">
    <text evidence="2 7">Transcriptional regulator which can act both as a coactivator and a corepressor and is the critical downstream regulatory target in the Hippo signaling pathway that plays a pivotal role in organ size control and tumor suppression by restricting proliferation and promoting apoptosis (By similarity). Required for expansion of the neural plate and neural plate border zone progenitor pools. Acts as a direct regulator of pax3 expression via interaction with tead1 (PubMed:21687713). Plays a key role in tissue tension and 3D tissue shape by regulating cortical actomyosin network formation (PubMed:25778702).</text>
</comment>
<comment type="subcellular location">
    <subcellularLocation>
        <location evidence="2">Cytoplasm</location>
    </subcellularLocation>
    <subcellularLocation>
        <location evidence="2">Nucleus</location>
    </subcellularLocation>
    <subcellularLocation>
        <location evidence="1">Cell junction</location>
        <location evidence="1">Tight junction</location>
    </subcellularLocation>
    <subcellularLocation>
        <location evidence="2">Cell membrane</location>
    </subcellularLocation>
    <text evidence="2">Both phosphorylation and cell density can regulate its subcellular localization. Phosphorylation sequesters it in the cytoplasm by inhibiting its translocation into the nucleus. At low density, predominantly nuclear and is translocated to the cytoplasm at high density.</text>
</comment>
<comment type="tissue specificity">
    <text evidence="6">Expressed in the notochord, brain, eyes, branchial arches and pectoral fins.</text>
</comment>
<comment type="developmental stage">
    <text evidence="6">Maternally expressed in the embryo: maternal expression is ubiquitous.</text>
</comment>
<comment type="PTM">
    <text evidence="2">Phosphorylated by lats1 and lats2; leading to cytoplasmic translocation and inactivation.</text>
</comment>
<comment type="disruption phenotype">
    <text evidence="6 7">Embryos display a small head with smaller eyes than normal and fewer cartilages in the branchial arches. Marked increase in cell death in brain (PubMed:19393221). Incomplete epiboly at gastrulation, characterized by blastopore closure defects and impaired axis formation (PubMed:21687713).</text>
</comment>
<comment type="similarity">
    <text evidence="9">Belongs to the YAP1 family.</text>
</comment>
<comment type="online information" name="Protein Spotlight">
    <link uri="https://www.proteinspotlight.org/back_issues/175/"/>
    <text>Shaping life - Issue 175 of January 2016</text>
</comment>
<accession>Q1L8J7</accession>
<accession>A1L1U5</accession>
<name>YAP1_DANRE</name>
<organism>
    <name type="scientific">Danio rerio</name>
    <name type="common">Zebrafish</name>
    <name type="synonym">Brachydanio rerio</name>
    <dbReference type="NCBI Taxonomy" id="7955"/>
    <lineage>
        <taxon>Eukaryota</taxon>
        <taxon>Metazoa</taxon>
        <taxon>Chordata</taxon>
        <taxon>Craniata</taxon>
        <taxon>Vertebrata</taxon>
        <taxon>Euteleostomi</taxon>
        <taxon>Actinopterygii</taxon>
        <taxon>Neopterygii</taxon>
        <taxon>Teleostei</taxon>
        <taxon>Ostariophysi</taxon>
        <taxon>Cypriniformes</taxon>
        <taxon>Danionidae</taxon>
        <taxon>Danioninae</taxon>
        <taxon>Danio</taxon>
    </lineage>
</organism>
<keyword id="KW-0010">Activator</keyword>
<keyword id="KW-0965">Cell junction</keyword>
<keyword id="KW-1003">Cell membrane</keyword>
<keyword id="KW-0175">Coiled coil</keyword>
<keyword id="KW-0963">Cytoplasm</keyword>
<keyword id="KW-0472">Membrane</keyword>
<keyword id="KW-0539">Nucleus</keyword>
<keyword id="KW-0597">Phosphoprotein</keyword>
<keyword id="KW-1185">Reference proteome</keyword>
<keyword id="KW-0677">Repeat</keyword>
<keyword id="KW-0678">Repressor</keyword>
<keyword id="KW-0796">Tight junction</keyword>
<keyword id="KW-0804">Transcription</keyword>
<keyword id="KW-0805">Transcription regulation</keyword>
<sequence length="442" mass="48362">MDPNQHNPPAGHQIVHVRGDSETDLEALFNAVMNPKNTIVPPSVPMRLRKLPDSFFTPPEPKSHSRQASTDAGTAGTVTPHHVRAHSSPASLQLGAVSPGALTSMGPANAPPQHLRQSSYEIPDDMPLPPGWEMAKTPSGQRYFLNHNDQTTTWQDPRKALLQMNQAAPASPVPVQQQNIMNPASGPLPDGWEQAITSEGEIYYINHKNKTTSWLDPRLDPRFAMNQQRISQSAPVKQGSQLPSSPQSGVMSGNNPIRLQQIHIEKERLRIKQELLRQRPQELALRNQLPTSMEQDGGTQNPVSSPGMGQDARNMTTNSSDPFLNSGTYHSRDESTDSGLSMSSYSVPRTPDDFLNSVDEMETGDTLGPGSMATQPSRFPDYLDAIPGTDVDLGTLEGESMAVEGEELMPSLQEALSSDILNDMESVLAATKIDKENFLTWL</sequence>
<feature type="chain" id="PRO_0000433905" description="Transcriptional coactivator YAP1">
    <location>
        <begin position="1"/>
        <end position="442"/>
    </location>
</feature>
<feature type="domain" description="WW 1" evidence="4">
    <location>
        <begin position="126"/>
        <end position="159"/>
    </location>
</feature>
<feature type="domain" description="WW 2" evidence="4">
    <location>
        <begin position="186"/>
        <end position="219"/>
    </location>
</feature>
<feature type="region of interest" description="Disordered" evidence="5">
    <location>
        <begin position="51"/>
        <end position="89"/>
    </location>
</feature>
<feature type="region of interest" description="Disordered" evidence="5">
    <location>
        <begin position="97"/>
        <end position="116"/>
    </location>
</feature>
<feature type="region of interest" description="Disordered" evidence="5">
    <location>
        <begin position="230"/>
        <end position="254"/>
    </location>
</feature>
<feature type="region of interest" description="Transactivation domain" evidence="2">
    <location>
        <begin position="247"/>
        <end position="442"/>
    </location>
</feature>
<feature type="region of interest" description="Disordered" evidence="5">
    <location>
        <begin position="286"/>
        <end position="374"/>
    </location>
</feature>
<feature type="coiled-coil region" evidence="3">
    <location>
        <begin position="258"/>
        <end position="279"/>
    </location>
</feature>
<feature type="compositionally biased region" description="Low complexity" evidence="5">
    <location>
        <begin position="238"/>
        <end position="249"/>
    </location>
</feature>
<feature type="compositionally biased region" description="Polar residues" evidence="5">
    <location>
        <begin position="288"/>
        <end position="304"/>
    </location>
</feature>
<feature type="compositionally biased region" description="Polar residues" evidence="5">
    <location>
        <begin position="313"/>
        <end position="329"/>
    </location>
</feature>
<feature type="compositionally biased region" description="Polar residues" evidence="5">
    <location>
        <begin position="337"/>
        <end position="347"/>
    </location>
</feature>
<feature type="modified residue" description="Phosphoserine; by LATS1 and LATS2" evidence="2">
    <location>
        <position position="21"/>
    </location>
</feature>
<feature type="modified residue" description="Phosphoserine; by LATS1 and LATS2" evidence="2">
    <location>
        <position position="69"/>
    </location>
</feature>
<feature type="modified residue" description="Phosphoserine; by LATS1 and LATS2" evidence="2">
    <location>
        <position position="87"/>
    </location>
</feature>
<feature type="modified residue" description="Phosphoserine; by LATS1 and LATS2" evidence="2">
    <location>
        <position position="119"/>
    </location>
</feature>
<feature type="sequence conflict" description="In Ref. 2; AAI29217." evidence="9" ref="2">
    <original>G</original>
    <variation>S</variation>
    <location>
        <position position="370"/>
    </location>
</feature>
<dbReference type="EMBL" id="CR762425">
    <property type="protein sequence ID" value="CAK04259.2"/>
    <property type="molecule type" value="Genomic_DNA"/>
</dbReference>
<dbReference type="EMBL" id="CT573116">
    <property type="protein sequence ID" value="CAK04259.2"/>
    <property type="status" value="JOINED"/>
    <property type="molecule type" value="Genomic_DNA"/>
</dbReference>
<dbReference type="EMBL" id="BC129216">
    <property type="protein sequence ID" value="AAI29217.1"/>
    <property type="molecule type" value="mRNA"/>
</dbReference>
<dbReference type="RefSeq" id="NP_001132952.1">
    <property type="nucleotide sequence ID" value="NM_001139480.1"/>
</dbReference>
<dbReference type="SMR" id="Q1L8J7"/>
<dbReference type="FunCoup" id="Q1L8J7">
    <property type="interactions" value="1161"/>
</dbReference>
<dbReference type="STRING" id="7955.ENSDARP00000089684"/>
<dbReference type="iPTMnet" id="Q1L8J7"/>
<dbReference type="PaxDb" id="7955-ENSDARP00000089684"/>
<dbReference type="Ensembl" id="ENSDART00000098914">
    <property type="protein sequence ID" value="ENSDARP00000089684"/>
    <property type="gene ID" value="ENSDARG00000068401"/>
</dbReference>
<dbReference type="Ensembl" id="ENSDART00000188193">
    <property type="protein sequence ID" value="ENSDARP00000152736"/>
    <property type="gene ID" value="ENSDARG00000112952"/>
</dbReference>
<dbReference type="GeneID" id="561411"/>
<dbReference type="KEGG" id="dre:561411"/>
<dbReference type="AGR" id="ZFIN:ZDB-GENE-030131-9710"/>
<dbReference type="CTD" id="10413"/>
<dbReference type="ZFIN" id="ZDB-GENE-030131-9710">
    <property type="gene designation" value="yap1"/>
</dbReference>
<dbReference type="eggNOG" id="KOG0940">
    <property type="taxonomic scope" value="Eukaryota"/>
</dbReference>
<dbReference type="HOGENOM" id="CLU_041917_0_1_1"/>
<dbReference type="InParanoid" id="Q1L8J7"/>
<dbReference type="OMA" id="IIHPRAN"/>
<dbReference type="OrthoDB" id="3045089at2759"/>
<dbReference type="PhylomeDB" id="Q1L8J7"/>
<dbReference type="TreeFam" id="TF326941"/>
<dbReference type="Reactome" id="R-DRE-1251985">
    <property type="pathway name" value="Nuclear signaling by ERBB4"/>
</dbReference>
<dbReference type="Reactome" id="R-DRE-2028269">
    <property type="pathway name" value="Signaling by Hippo"/>
</dbReference>
<dbReference type="Reactome" id="R-DRE-8939236">
    <property type="pathway name" value="RUNX1 regulates transcription of genes involved in differentiation of HSCs"/>
</dbReference>
<dbReference type="Reactome" id="R-DRE-9860927">
    <property type="pathway name" value="Turbulent (oscillatory, disturbed) flow shear stress activates signaling by PIEZO1 and integrins in endothelial cells"/>
</dbReference>
<dbReference type="PRO" id="PR:Q1L8J7"/>
<dbReference type="Proteomes" id="UP000000437">
    <property type="component" value="Alternate scaffold 18"/>
</dbReference>
<dbReference type="Proteomes" id="UP000000437">
    <property type="component" value="Chromosome 18"/>
</dbReference>
<dbReference type="Bgee" id="ENSDARG00000068401">
    <property type="expression patterns" value="Expressed in swim bladder and 25 other cell types or tissues"/>
</dbReference>
<dbReference type="GO" id="GO:0005923">
    <property type="term" value="C:bicellular tight junction"/>
    <property type="evidence" value="ECO:0007669"/>
    <property type="project" value="UniProtKB-SubCell"/>
</dbReference>
<dbReference type="GO" id="GO:0005911">
    <property type="term" value="C:cell-cell junction"/>
    <property type="evidence" value="ECO:0000250"/>
    <property type="project" value="UniProtKB"/>
</dbReference>
<dbReference type="GO" id="GO:0000785">
    <property type="term" value="C:chromatin"/>
    <property type="evidence" value="ECO:0000314"/>
    <property type="project" value="ZFIN"/>
</dbReference>
<dbReference type="GO" id="GO:0005737">
    <property type="term" value="C:cytoplasm"/>
    <property type="evidence" value="ECO:0000250"/>
    <property type="project" value="UniProtKB"/>
</dbReference>
<dbReference type="GO" id="GO:0005634">
    <property type="term" value="C:nucleus"/>
    <property type="evidence" value="ECO:0000314"/>
    <property type="project" value="ZFIN"/>
</dbReference>
<dbReference type="GO" id="GO:0005886">
    <property type="term" value="C:plasma membrane"/>
    <property type="evidence" value="ECO:0007669"/>
    <property type="project" value="UniProtKB-SubCell"/>
</dbReference>
<dbReference type="GO" id="GO:0003713">
    <property type="term" value="F:transcription coactivator activity"/>
    <property type="evidence" value="ECO:0000315"/>
    <property type="project" value="ZFIN"/>
</dbReference>
<dbReference type="GO" id="GO:0003714">
    <property type="term" value="F:transcription corepressor activity"/>
    <property type="evidence" value="ECO:0000318"/>
    <property type="project" value="GO_Central"/>
</dbReference>
<dbReference type="GO" id="GO:0048514">
    <property type="term" value="P:blood vessel morphogenesis"/>
    <property type="evidence" value="ECO:0000315"/>
    <property type="project" value="ZFIN"/>
</dbReference>
<dbReference type="GO" id="GO:0030509">
    <property type="term" value="P:BMP signaling pathway"/>
    <property type="evidence" value="ECO:0000315"/>
    <property type="project" value="ZFIN"/>
</dbReference>
<dbReference type="GO" id="GO:0007420">
    <property type="term" value="P:brain development"/>
    <property type="evidence" value="ECO:0000315"/>
    <property type="project" value="ZFIN"/>
</dbReference>
<dbReference type="GO" id="GO:0051216">
    <property type="term" value="P:cartilage development"/>
    <property type="evidence" value="ECO:0000315"/>
    <property type="project" value="ZFIN"/>
</dbReference>
<dbReference type="GO" id="GO:0007155">
    <property type="term" value="P:cell adhesion"/>
    <property type="evidence" value="ECO:0000315"/>
    <property type="project" value="ZFIN"/>
</dbReference>
<dbReference type="GO" id="GO:0060271">
    <property type="term" value="P:cilium assembly"/>
    <property type="evidence" value="ECO:0000315"/>
    <property type="project" value="ZFIN"/>
</dbReference>
<dbReference type="GO" id="GO:0061371">
    <property type="term" value="P:determination of heart left/right asymmetry"/>
    <property type="evidence" value="ECO:0000315"/>
    <property type="project" value="ZFIN"/>
</dbReference>
<dbReference type="GO" id="GO:0009950">
    <property type="term" value="P:dorsal/ventral axis specification"/>
    <property type="evidence" value="ECO:0000315"/>
    <property type="project" value="CACAO"/>
</dbReference>
<dbReference type="GO" id="GO:0048566">
    <property type="term" value="P:embryonic digestive tract development"/>
    <property type="evidence" value="ECO:0000315"/>
    <property type="project" value="ZFIN"/>
</dbReference>
<dbReference type="GO" id="GO:0035162">
    <property type="term" value="P:embryonic hemopoiesis"/>
    <property type="evidence" value="ECO:0000315"/>
    <property type="project" value="CACAO"/>
</dbReference>
<dbReference type="GO" id="GO:0007492">
    <property type="term" value="P:endoderm development"/>
    <property type="evidence" value="ECO:0000315"/>
    <property type="project" value="ZFIN"/>
</dbReference>
<dbReference type="GO" id="GO:1905590">
    <property type="term" value="P:fibronectin fibril organization"/>
    <property type="evidence" value="ECO:0000315"/>
    <property type="project" value="ZFIN"/>
</dbReference>
<dbReference type="GO" id="GO:0031101">
    <property type="term" value="P:fin regeneration"/>
    <property type="evidence" value="ECO:0000315"/>
    <property type="project" value="ZFIN"/>
</dbReference>
<dbReference type="GO" id="GO:0042593">
    <property type="term" value="P:glucose homeostasis"/>
    <property type="evidence" value="ECO:0000315"/>
    <property type="project" value="ZFIN"/>
</dbReference>
<dbReference type="GO" id="GO:0060914">
    <property type="term" value="P:heart formation"/>
    <property type="evidence" value="ECO:0000315"/>
    <property type="project" value="CACAO"/>
</dbReference>
<dbReference type="GO" id="GO:0035329">
    <property type="term" value="P:hippo signaling"/>
    <property type="evidence" value="ECO:0000318"/>
    <property type="project" value="GO_Central"/>
</dbReference>
<dbReference type="GO" id="GO:0070121">
    <property type="term" value="P:Kupffer's vesicle development"/>
    <property type="evidence" value="ECO:0000316"/>
    <property type="project" value="ZFIN"/>
</dbReference>
<dbReference type="GO" id="GO:0001889">
    <property type="term" value="P:liver development"/>
    <property type="evidence" value="ECO:0000315"/>
    <property type="project" value="ZFIN"/>
</dbReference>
<dbReference type="GO" id="GO:0043066">
    <property type="term" value="P:negative regulation of apoptotic process"/>
    <property type="evidence" value="ECO:0000315"/>
    <property type="project" value="CACAO"/>
</dbReference>
<dbReference type="GO" id="GO:0010629">
    <property type="term" value="P:negative regulation of gene expression"/>
    <property type="evidence" value="ECO:0000315"/>
    <property type="project" value="CACAO"/>
</dbReference>
<dbReference type="GO" id="GO:0031016">
    <property type="term" value="P:pancreas development"/>
    <property type="evidence" value="ECO:0000315"/>
    <property type="project" value="ZFIN"/>
</dbReference>
<dbReference type="GO" id="GO:0045944">
    <property type="term" value="P:positive regulation of transcription by RNA polymerase II"/>
    <property type="evidence" value="ECO:0000318"/>
    <property type="project" value="GO_Central"/>
</dbReference>
<dbReference type="GO" id="GO:0048916">
    <property type="term" value="P:posterior lateral line development"/>
    <property type="evidence" value="ECO:0000315"/>
    <property type="project" value="ZFIN"/>
</dbReference>
<dbReference type="GO" id="GO:0039022">
    <property type="term" value="P:pronephric duct development"/>
    <property type="evidence" value="ECO:0000315"/>
    <property type="project" value="ZFIN"/>
</dbReference>
<dbReference type="GO" id="GO:0010468">
    <property type="term" value="P:regulation of gene expression"/>
    <property type="evidence" value="ECO:0000315"/>
    <property type="project" value="ZFIN"/>
</dbReference>
<dbReference type="GO" id="GO:0046620">
    <property type="term" value="P:regulation of organ growth"/>
    <property type="evidence" value="ECO:0000315"/>
    <property type="project" value="ZFIN"/>
</dbReference>
<dbReference type="GO" id="GO:0003406">
    <property type="term" value="P:retinal pigment epithelium development"/>
    <property type="evidence" value="ECO:0000315"/>
    <property type="project" value="ZFIN"/>
</dbReference>
<dbReference type="GO" id="GO:0001944">
    <property type="term" value="P:vasculature development"/>
    <property type="evidence" value="ECO:0000315"/>
    <property type="project" value="ZFIN"/>
</dbReference>
<dbReference type="GO" id="GO:0001570">
    <property type="term" value="P:vasculogenesis"/>
    <property type="evidence" value="ECO:0000315"/>
    <property type="project" value="ZFIN"/>
</dbReference>
<dbReference type="GO" id="GO:0003173">
    <property type="term" value="P:ventriculo bulbo valve development"/>
    <property type="evidence" value="ECO:0000315"/>
    <property type="project" value="ZFIN"/>
</dbReference>
<dbReference type="CDD" id="cd00201">
    <property type="entry name" value="WW"/>
    <property type="match status" value="2"/>
</dbReference>
<dbReference type="FunFam" id="2.20.70.10:FF:000019">
    <property type="entry name" value="Putative transcriptional coactivator YAP1"/>
    <property type="match status" value="1"/>
</dbReference>
<dbReference type="FunFam" id="2.20.70.10:FF:000012">
    <property type="entry name" value="transcriptional coactivator YAP1 isoform X2"/>
    <property type="match status" value="1"/>
</dbReference>
<dbReference type="Gene3D" id="2.20.70.10">
    <property type="match status" value="2"/>
</dbReference>
<dbReference type="Gene3D" id="6.20.430.10">
    <property type="match status" value="1"/>
</dbReference>
<dbReference type="InterPro" id="IPR053819">
    <property type="entry name" value="TEADIR3_omega_loop"/>
</dbReference>
<dbReference type="InterPro" id="IPR001202">
    <property type="entry name" value="WW_dom"/>
</dbReference>
<dbReference type="InterPro" id="IPR036020">
    <property type="entry name" value="WW_dom_sf"/>
</dbReference>
<dbReference type="InterPro" id="IPR051583">
    <property type="entry name" value="YAP1"/>
</dbReference>
<dbReference type="PANTHER" id="PTHR17616:SF9">
    <property type="entry name" value="TRANSCRIPTIONAL COACTIVATOR YAP1"/>
    <property type="match status" value="1"/>
</dbReference>
<dbReference type="PANTHER" id="PTHR17616">
    <property type="entry name" value="YES-ASSOCIATED PROTEIN YAP1 FAMILY MEMBER"/>
    <property type="match status" value="1"/>
</dbReference>
<dbReference type="Pfam" id="PF15238">
    <property type="entry name" value="TEADIR3"/>
    <property type="match status" value="1"/>
</dbReference>
<dbReference type="Pfam" id="PF00397">
    <property type="entry name" value="WW"/>
    <property type="match status" value="2"/>
</dbReference>
<dbReference type="SMART" id="SM00456">
    <property type="entry name" value="WW"/>
    <property type="match status" value="2"/>
</dbReference>
<dbReference type="SUPFAM" id="SSF51045">
    <property type="entry name" value="WW domain"/>
    <property type="match status" value="2"/>
</dbReference>
<dbReference type="PROSITE" id="PS01159">
    <property type="entry name" value="WW_DOMAIN_1"/>
    <property type="match status" value="2"/>
</dbReference>
<dbReference type="PROSITE" id="PS50020">
    <property type="entry name" value="WW_DOMAIN_2"/>
    <property type="match status" value="2"/>
</dbReference>
<reference key="1">
    <citation type="journal article" date="2013" name="Nature">
        <title>The zebrafish reference genome sequence and its relationship to the human genome.</title>
        <authorList>
            <person name="Howe K."/>
            <person name="Clark M.D."/>
            <person name="Torroja C.F."/>
            <person name="Torrance J."/>
            <person name="Berthelot C."/>
            <person name="Muffato M."/>
            <person name="Collins J.E."/>
            <person name="Humphray S."/>
            <person name="McLaren K."/>
            <person name="Matthews L."/>
            <person name="McLaren S."/>
            <person name="Sealy I."/>
            <person name="Caccamo M."/>
            <person name="Churcher C."/>
            <person name="Scott C."/>
            <person name="Barrett J.C."/>
            <person name="Koch R."/>
            <person name="Rauch G.J."/>
            <person name="White S."/>
            <person name="Chow W."/>
            <person name="Kilian B."/>
            <person name="Quintais L.T."/>
            <person name="Guerra-Assuncao J.A."/>
            <person name="Zhou Y."/>
            <person name="Gu Y."/>
            <person name="Yen J."/>
            <person name="Vogel J.H."/>
            <person name="Eyre T."/>
            <person name="Redmond S."/>
            <person name="Banerjee R."/>
            <person name="Chi J."/>
            <person name="Fu B."/>
            <person name="Langley E."/>
            <person name="Maguire S.F."/>
            <person name="Laird G.K."/>
            <person name="Lloyd D."/>
            <person name="Kenyon E."/>
            <person name="Donaldson S."/>
            <person name="Sehra H."/>
            <person name="Almeida-King J."/>
            <person name="Loveland J."/>
            <person name="Trevanion S."/>
            <person name="Jones M."/>
            <person name="Quail M."/>
            <person name="Willey D."/>
            <person name="Hunt A."/>
            <person name="Burton J."/>
            <person name="Sims S."/>
            <person name="McLay K."/>
            <person name="Plumb B."/>
            <person name="Davis J."/>
            <person name="Clee C."/>
            <person name="Oliver K."/>
            <person name="Clark R."/>
            <person name="Riddle C."/>
            <person name="Elliot D."/>
            <person name="Threadgold G."/>
            <person name="Harden G."/>
            <person name="Ware D."/>
            <person name="Begum S."/>
            <person name="Mortimore B."/>
            <person name="Kerry G."/>
            <person name="Heath P."/>
            <person name="Phillimore B."/>
            <person name="Tracey A."/>
            <person name="Corby N."/>
            <person name="Dunn M."/>
            <person name="Johnson C."/>
            <person name="Wood J."/>
            <person name="Clark S."/>
            <person name="Pelan S."/>
            <person name="Griffiths G."/>
            <person name="Smith M."/>
            <person name="Glithero R."/>
            <person name="Howden P."/>
            <person name="Barker N."/>
            <person name="Lloyd C."/>
            <person name="Stevens C."/>
            <person name="Harley J."/>
            <person name="Holt K."/>
            <person name="Panagiotidis G."/>
            <person name="Lovell J."/>
            <person name="Beasley H."/>
            <person name="Henderson C."/>
            <person name="Gordon D."/>
            <person name="Auger K."/>
            <person name="Wright D."/>
            <person name="Collins J."/>
            <person name="Raisen C."/>
            <person name="Dyer L."/>
            <person name="Leung K."/>
            <person name="Robertson L."/>
            <person name="Ambridge K."/>
            <person name="Leongamornlert D."/>
            <person name="McGuire S."/>
            <person name="Gilderthorp R."/>
            <person name="Griffiths C."/>
            <person name="Manthravadi D."/>
            <person name="Nichol S."/>
            <person name="Barker G."/>
            <person name="Whitehead S."/>
            <person name="Kay M."/>
            <person name="Brown J."/>
            <person name="Murnane C."/>
            <person name="Gray E."/>
            <person name="Humphries M."/>
            <person name="Sycamore N."/>
            <person name="Barker D."/>
            <person name="Saunders D."/>
            <person name="Wallis J."/>
            <person name="Babbage A."/>
            <person name="Hammond S."/>
            <person name="Mashreghi-Mohammadi M."/>
            <person name="Barr L."/>
            <person name="Martin S."/>
            <person name="Wray P."/>
            <person name="Ellington A."/>
            <person name="Matthews N."/>
            <person name="Ellwood M."/>
            <person name="Woodmansey R."/>
            <person name="Clark G."/>
            <person name="Cooper J."/>
            <person name="Tromans A."/>
            <person name="Grafham D."/>
            <person name="Skuce C."/>
            <person name="Pandian R."/>
            <person name="Andrews R."/>
            <person name="Harrison E."/>
            <person name="Kimberley A."/>
            <person name="Garnett J."/>
            <person name="Fosker N."/>
            <person name="Hall R."/>
            <person name="Garner P."/>
            <person name="Kelly D."/>
            <person name="Bird C."/>
            <person name="Palmer S."/>
            <person name="Gehring I."/>
            <person name="Berger A."/>
            <person name="Dooley C.M."/>
            <person name="Ersan-Urun Z."/>
            <person name="Eser C."/>
            <person name="Geiger H."/>
            <person name="Geisler M."/>
            <person name="Karotki L."/>
            <person name="Kirn A."/>
            <person name="Konantz J."/>
            <person name="Konantz M."/>
            <person name="Oberlander M."/>
            <person name="Rudolph-Geiger S."/>
            <person name="Teucke M."/>
            <person name="Lanz C."/>
            <person name="Raddatz G."/>
            <person name="Osoegawa K."/>
            <person name="Zhu B."/>
            <person name="Rapp A."/>
            <person name="Widaa S."/>
            <person name="Langford C."/>
            <person name="Yang F."/>
            <person name="Schuster S.C."/>
            <person name="Carter N.P."/>
            <person name="Harrow J."/>
            <person name="Ning Z."/>
            <person name="Herrero J."/>
            <person name="Searle S.M."/>
            <person name="Enright A."/>
            <person name="Geisler R."/>
            <person name="Plasterk R.H."/>
            <person name="Lee C."/>
            <person name="Westerfield M."/>
            <person name="de Jong P.J."/>
            <person name="Zon L.I."/>
            <person name="Postlethwait J.H."/>
            <person name="Nusslein-Volhard C."/>
            <person name="Hubbard T.J."/>
            <person name="Roest Crollius H."/>
            <person name="Rogers J."/>
            <person name="Stemple D.L."/>
        </authorList>
    </citation>
    <scope>NUCLEOTIDE SEQUENCE [LARGE SCALE GENOMIC DNA]</scope>
    <source>
        <strain>Tuebingen</strain>
    </source>
</reference>
<reference key="2">
    <citation type="submission" date="2006-12" db="EMBL/GenBank/DDBJ databases">
        <authorList>
            <consortium name="NIH - Zebrafish Gene Collection (ZGC) project"/>
        </authorList>
    </citation>
    <scope>NUCLEOTIDE SEQUENCE [LARGE SCALE MRNA]</scope>
    <source>
        <tissue>Embryo</tissue>
    </source>
</reference>
<reference key="3">
    <citation type="journal article" date="2009" name="Biochem. Biophys. Res. Commun.">
        <title>yap is required for the development of brain, eyes, and neural crest in zebrafish.</title>
        <authorList>
            <person name="Jiang Q."/>
            <person name="Liu D."/>
            <person name="Gong Y."/>
            <person name="Wang Y."/>
            <person name="Sun S."/>
            <person name="Gui Y."/>
            <person name="Song H."/>
        </authorList>
    </citation>
    <scope>TISSUE SPECIFICITY</scope>
    <scope>DEVELOPMENTAL STAGE</scope>
    <scope>DISRUPTION PHENOTYPE</scope>
</reference>
<reference key="4">
    <citation type="journal article" date="2011" name="PLoS ONE">
        <title>Yes-associated protein 65 (YAP) expands neural progenitors and regulates Pax3 expression in the neural plate border zone.</title>
        <authorList>
            <person name="Gee S.T."/>
            <person name="Milgram S.L."/>
            <person name="Kramer K.L."/>
            <person name="Conlon F.L."/>
            <person name="Moody S.A."/>
        </authorList>
    </citation>
    <scope>FUNCTION</scope>
    <scope>DISRUPTION PHENOTYPE</scope>
</reference>
<reference key="5">
    <citation type="journal article" date="2015" name="Nature">
        <title>YAP is essential for tissue tension to ensure vertebrate 3D body shape.</title>
        <authorList>
            <person name="Porazinski S."/>
            <person name="Wang H."/>
            <person name="Asaoka Y."/>
            <person name="Behrndt M."/>
            <person name="Miyamoto T."/>
            <person name="Morita H."/>
            <person name="Hata S."/>
            <person name="Sasaki T."/>
            <person name="Krens S.F."/>
            <person name="Osada Y."/>
            <person name="Asaka S."/>
            <person name="Momoi A."/>
            <person name="Linton S."/>
            <person name="Miesfeld J.B."/>
            <person name="Link B.A."/>
            <person name="Senga T."/>
            <person name="Castillo-Morales A."/>
            <person name="Urrutia A.O."/>
            <person name="Shimizu N."/>
            <person name="Nagase H."/>
            <person name="Matsuura S."/>
            <person name="Bagby S."/>
            <person name="Kondoh H."/>
            <person name="Nishina H."/>
            <person name="Heisenberg C.P."/>
            <person name="Furutani-Seiki M."/>
        </authorList>
    </citation>
    <scope>FUNCTION</scope>
</reference>
<evidence type="ECO:0000250" key="1">
    <source>
        <dbReference type="UniProtKB" id="A0A8C0NGY6"/>
    </source>
</evidence>
<evidence type="ECO:0000250" key="2">
    <source>
        <dbReference type="UniProtKB" id="P46937"/>
    </source>
</evidence>
<evidence type="ECO:0000255" key="3"/>
<evidence type="ECO:0000255" key="4">
    <source>
        <dbReference type="PROSITE-ProRule" id="PRU00224"/>
    </source>
</evidence>
<evidence type="ECO:0000256" key="5">
    <source>
        <dbReference type="SAM" id="MobiDB-lite"/>
    </source>
</evidence>
<evidence type="ECO:0000269" key="6">
    <source>
    </source>
</evidence>
<evidence type="ECO:0000269" key="7">
    <source>
    </source>
</evidence>
<evidence type="ECO:0000303" key="8">
    <source>
    </source>
</evidence>
<evidence type="ECO:0000305" key="9"/>
<evidence type="ECO:0000312" key="10">
    <source>
        <dbReference type="EMBL" id="CAK04259.2"/>
    </source>
</evidence>
<gene>
    <name type="primary">yap1</name>
    <name evidence="10" type="ORF">CH211-181P1.5-001</name>
</gene>